<name>CZCO_GEOKA</name>
<protein>
    <recommendedName>
        <fullName>Uncharacterized oxidoreductase CzcO-like</fullName>
        <ecNumber>1.-.-.-</ecNumber>
    </recommendedName>
</protein>
<feature type="chain" id="PRO_0000337071" description="Uncharacterized oxidoreductase CzcO-like">
    <location>
        <begin position="1"/>
        <end position="348"/>
    </location>
</feature>
<sequence>MQHIVDVLVIGASQAGLAMGYYLKQNNILFAIVGKENRIGDVWRNRYDSLVLFTPRWFSSLPGMALKGDPNGYPTKDEIADYLEDYAQKFELPIHLNTEVISLQKEDEIFKVTTNNGNYVAEKVVVATGPFQKPYIPPFAESLSDKVYQVHTSRYLNPSQLQEGSVLVVGAGNSGAQIAVELSEDREVYLSVGHKMKFFPLEIMGKSIFWWFKKLGLLNVHINSSLGQFISKQSDPIFGKELKHLIQEGKIKIKPRTESILGDVISFADNSQIQVQNVIWATGFYSDYSWIQIPNVLDHRGKPIHQRGVTSVKGLYFLGLPWQYRRGSALIGGVGADAEYLINDILNH</sequence>
<gene>
    <name type="ordered locus">GK0582</name>
</gene>
<accession>Q5L2G3</accession>
<organism>
    <name type="scientific">Geobacillus kaustophilus (strain HTA426)</name>
    <dbReference type="NCBI Taxonomy" id="235909"/>
    <lineage>
        <taxon>Bacteria</taxon>
        <taxon>Bacillati</taxon>
        <taxon>Bacillota</taxon>
        <taxon>Bacilli</taxon>
        <taxon>Bacillales</taxon>
        <taxon>Anoxybacillaceae</taxon>
        <taxon>Geobacillus</taxon>
        <taxon>Geobacillus thermoleovorans group</taxon>
    </lineage>
</organism>
<proteinExistence type="predicted"/>
<dbReference type="EC" id="1.-.-.-"/>
<dbReference type="EMBL" id="BA000043">
    <property type="protein sequence ID" value="BAD74867.1"/>
    <property type="molecule type" value="Genomic_DNA"/>
</dbReference>
<dbReference type="RefSeq" id="WP_011230086.1">
    <property type="nucleotide sequence ID" value="NC_006510.1"/>
</dbReference>
<dbReference type="SMR" id="Q5L2G3"/>
<dbReference type="STRING" id="235909.GK0582"/>
<dbReference type="DrugCentral" id="Q5L2G3"/>
<dbReference type="KEGG" id="gka:GK0582"/>
<dbReference type="eggNOG" id="COG2072">
    <property type="taxonomic scope" value="Bacteria"/>
</dbReference>
<dbReference type="HOGENOM" id="CLU_006909_1_0_9"/>
<dbReference type="Proteomes" id="UP000001172">
    <property type="component" value="Chromosome"/>
</dbReference>
<dbReference type="GO" id="GO:0050660">
    <property type="term" value="F:flavin adenine dinucleotide binding"/>
    <property type="evidence" value="ECO:0007669"/>
    <property type="project" value="TreeGrafter"/>
</dbReference>
<dbReference type="GO" id="GO:0004497">
    <property type="term" value="F:monooxygenase activity"/>
    <property type="evidence" value="ECO:0007669"/>
    <property type="project" value="TreeGrafter"/>
</dbReference>
<dbReference type="Gene3D" id="3.50.50.60">
    <property type="entry name" value="FAD/NAD(P)-binding domain"/>
    <property type="match status" value="1"/>
</dbReference>
<dbReference type="InterPro" id="IPR050982">
    <property type="entry name" value="Auxin_biosynth/cation_transpt"/>
</dbReference>
<dbReference type="InterPro" id="IPR036188">
    <property type="entry name" value="FAD/NAD-bd_sf"/>
</dbReference>
<dbReference type="PANTHER" id="PTHR43539">
    <property type="entry name" value="FLAVIN-BINDING MONOOXYGENASE-LIKE PROTEIN (AFU_ORTHOLOGUE AFUA_4G09220)"/>
    <property type="match status" value="1"/>
</dbReference>
<dbReference type="PANTHER" id="PTHR43539:SF78">
    <property type="entry name" value="FLAVIN-CONTAINING MONOOXYGENASE"/>
    <property type="match status" value="1"/>
</dbReference>
<dbReference type="Pfam" id="PF13738">
    <property type="entry name" value="Pyr_redox_3"/>
    <property type="match status" value="1"/>
</dbReference>
<dbReference type="PRINTS" id="PR00368">
    <property type="entry name" value="FADPNR"/>
</dbReference>
<dbReference type="PRINTS" id="PR00469">
    <property type="entry name" value="PNDRDTASEII"/>
</dbReference>
<dbReference type="SUPFAM" id="SSF51905">
    <property type="entry name" value="FAD/NAD(P)-binding domain"/>
    <property type="match status" value="2"/>
</dbReference>
<keyword id="KW-0560">Oxidoreductase</keyword>
<keyword id="KW-1185">Reference proteome</keyword>
<reference key="1">
    <citation type="journal article" date="2004" name="Nucleic Acids Res.">
        <title>Thermoadaptation trait revealed by the genome sequence of thermophilic Geobacillus kaustophilus.</title>
        <authorList>
            <person name="Takami H."/>
            <person name="Takaki Y."/>
            <person name="Chee G.-J."/>
            <person name="Nishi S."/>
            <person name="Shimamura S."/>
            <person name="Suzuki H."/>
            <person name="Matsui S."/>
            <person name="Uchiyama I."/>
        </authorList>
    </citation>
    <scope>NUCLEOTIDE SEQUENCE [LARGE SCALE GENOMIC DNA]</scope>
    <source>
        <strain>HTA426</strain>
    </source>
</reference>